<reference key="1">
    <citation type="submission" date="2004-08" db="EMBL/GenBank/DDBJ databases">
        <authorList>
            <consortium name="NIH - Xenopus Gene Collection (XGC) project"/>
        </authorList>
    </citation>
    <scope>NUCLEOTIDE SEQUENCE [LARGE SCALE MRNA]</scope>
    <source>
        <tissue>Kidney</tissue>
        <tissue>Spleen</tissue>
    </source>
</reference>
<comment type="subunit">
    <text evidence="1">Homodimer.</text>
</comment>
<comment type="subcellular location">
    <subcellularLocation>
        <location evidence="2">Lysosome membrane</location>
        <topology evidence="2">Multi-pass membrane protein</topology>
    </subcellularLocation>
    <subcellularLocation>
        <location evidence="2">Late endosome</location>
    </subcellularLocation>
</comment>
<comment type="similarity">
    <text evidence="4">Belongs to the TMEM192 family.</text>
</comment>
<comment type="sequence caution" evidence="4">
    <conflict type="erroneous initiation">
        <sequence resource="EMBL-CDS" id="AAH80426"/>
    </conflict>
</comment>
<accession>Q66KF2</accession>
<accession>Q4V822</accession>
<proteinExistence type="evidence at transcript level"/>
<keyword id="KW-0967">Endosome</keyword>
<keyword id="KW-0458">Lysosome</keyword>
<keyword id="KW-0472">Membrane</keyword>
<keyword id="KW-1185">Reference proteome</keyword>
<keyword id="KW-0812">Transmembrane</keyword>
<keyword id="KW-1133">Transmembrane helix</keyword>
<sequence length="261" mass="29631">MERNSRIDSSGDLTQSADEDCFLDAPLLPSQKLQSVIRPHFHPVPTVCISILLALINLAYVTLAVVAFYFCLFSGKKKECNQSVAPFNLSTVLVISKLILWLLHVVNERFAHHHHCKAKNKGFLHLYRSTRHLKGLPLIIHSTGNAALLLILSVQDSISSNRQLYPCLILSVLLLELILSVICLIIYTVRIYRFNKRKPRPDIIEEEKINAYEGHVNPEIGFRHRASLEEVVEKQGDTIEYLKHHNALLSKQLLALTSNQD</sequence>
<gene>
    <name type="primary">tmem192</name>
</gene>
<protein>
    <recommendedName>
        <fullName>Transmembrane protein 192</fullName>
    </recommendedName>
</protein>
<organism>
    <name type="scientific">Xenopus laevis</name>
    <name type="common">African clawed frog</name>
    <dbReference type="NCBI Taxonomy" id="8355"/>
    <lineage>
        <taxon>Eukaryota</taxon>
        <taxon>Metazoa</taxon>
        <taxon>Chordata</taxon>
        <taxon>Craniata</taxon>
        <taxon>Vertebrata</taxon>
        <taxon>Euteleostomi</taxon>
        <taxon>Amphibia</taxon>
        <taxon>Batrachia</taxon>
        <taxon>Anura</taxon>
        <taxon>Pipoidea</taxon>
        <taxon>Pipidae</taxon>
        <taxon>Xenopodinae</taxon>
        <taxon>Xenopus</taxon>
        <taxon>Xenopus</taxon>
    </lineage>
</organism>
<feature type="chain" id="PRO_0000311272" description="Transmembrane protein 192">
    <location>
        <begin position="1"/>
        <end position="261"/>
    </location>
</feature>
<feature type="transmembrane region" description="Helical" evidence="3">
    <location>
        <begin position="51"/>
        <end position="71"/>
    </location>
</feature>
<feature type="transmembrane region" description="Helical" evidence="3">
    <location>
        <begin position="86"/>
        <end position="106"/>
    </location>
</feature>
<feature type="transmembrane region" description="Helical" evidence="3">
    <location>
        <begin position="135"/>
        <end position="155"/>
    </location>
</feature>
<feature type="transmembrane region" description="Helical" evidence="3">
    <location>
        <begin position="167"/>
        <end position="187"/>
    </location>
</feature>
<feature type="sequence conflict" description="In Ref. 1; AAH97598." evidence="4" ref="1">
    <original>SI</original>
    <variation>FF</variation>
    <location>
        <begin position="157"/>
        <end position="158"/>
    </location>
</feature>
<feature type="sequence conflict" description="In Ref. 1; AAH97598." evidence="4" ref="1">
    <original>L</original>
    <variation>V</variation>
    <location>
        <position position="179"/>
    </location>
</feature>
<dbReference type="EMBL" id="BC080426">
    <property type="protein sequence ID" value="AAH80426.1"/>
    <property type="status" value="ALT_INIT"/>
    <property type="molecule type" value="mRNA"/>
</dbReference>
<dbReference type="EMBL" id="BC097598">
    <property type="protein sequence ID" value="AAH97598.1"/>
    <property type="molecule type" value="mRNA"/>
</dbReference>
<dbReference type="RefSeq" id="NP_001086471.1">
    <property type="nucleotide sequence ID" value="NM_001093002.1"/>
</dbReference>
<dbReference type="SMR" id="Q66KF2"/>
<dbReference type="DNASU" id="446304"/>
<dbReference type="GeneID" id="446304"/>
<dbReference type="KEGG" id="xla:446304"/>
<dbReference type="AGR" id="Xenbase:XB-GENE-5752008"/>
<dbReference type="CTD" id="446304"/>
<dbReference type="Xenbase" id="XB-GENE-5752008">
    <property type="gene designation" value="tmem192.L"/>
</dbReference>
<dbReference type="OrthoDB" id="6277625at2759"/>
<dbReference type="Proteomes" id="UP000186698">
    <property type="component" value="Chromosome 1L"/>
</dbReference>
<dbReference type="Bgee" id="446304">
    <property type="expression patterns" value="Expressed in egg cell and 19 other cell types or tissues"/>
</dbReference>
<dbReference type="GO" id="GO:0005770">
    <property type="term" value="C:late endosome"/>
    <property type="evidence" value="ECO:0000318"/>
    <property type="project" value="GO_Central"/>
</dbReference>
<dbReference type="GO" id="GO:0005765">
    <property type="term" value="C:lysosomal membrane"/>
    <property type="evidence" value="ECO:0000318"/>
    <property type="project" value="GO_Central"/>
</dbReference>
<dbReference type="InterPro" id="IPR029399">
    <property type="entry name" value="TMEM192"/>
</dbReference>
<dbReference type="PANTHER" id="PTHR31592">
    <property type="entry name" value="TRANSMEMBRANE PROTEIN 192"/>
    <property type="match status" value="1"/>
</dbReference>
<dbReference type="PANTHER" id="PTHR31592:SF1">
    <property type="entry name" value="TRANSMEMBRANE PROTEIN 192"/>
    <property type="match status" value="1"/>
</dbReference>
<dbReference type="Pfam" id="PF14802">
    <property type="entry name" value="TMEM192"/>
    <property type="match status" value="1"/>
</dbReference>
<name>TM192_XENLA</name>
<evidence type="ECO:0000250" key="1"/>
<evidence type="ECO:0000250" key="2">
    <source>
        <dbReference type="UniProtKB" id="Q8IY95"/>
    </source>
</evidence>
<evidence type="ECO:0000255" key="3"/>
<evidence type="ECO:0000305" key="4"/>